<proteinExistence type="inferred from homology"/>
<evidence type="ECO:0000255" key="1">
    <source>
        <dbReference type="HAMAP-Rule" id="MF_01551"/>
    </source>
</evidence>
<organism>
    <name type="scientific">Shewanella baltica (strain OS185)</name>
    <dbReference type="NCBI Taxonomy" id="402882"/>
    <lineage>
        <taxon>Bacteria</taxon>
        <taxon>Pseudomonadati</taxon>
        <taxon>Pseudomonadota</taxon>
        <taxon>Gammaproteobacteria</taxon>
        <taxon>Alteromonadales</taxon>
        <taxon>Shewanellaceae</taxon>
        <taxon>Shewanella</taxon>
    </lineage>
</organism>
<gene>
    <name evidence="1" type="primary">rlmM</name>
    <name type="ordered locus">Shew185_1353</name>
</gene>
<dbReference type="EC" id="2.1.1.186" evidence="1"/>
<dbReference type="EMBL" id="CP000753">
    <property type="protein sequence ID" value="ABS07503.1"/>
    <property type="molecule type" value="Genomic_DNA"/>
</dbReference>
<dbReference type="RefSeq" id="WP_012088667.1">
    <property type="nucleotide sequence ID" value="NC_009665.1"/>
</dbReference>
<dbReference type="SMR" id="A6WL14"/>
<dbReference type="GeneID" id="11771647"/>
<dbReference type="KEGG" id="sbm:Shew185_1353"/>
<dbReference type="HOGENOM" id="CLU_043780_0_0_6"/>
<dbReference type="GO" id="GO:0005737">
    <property type="term" value="C:cytoplasm"/>
    <property type="evidence" value="ECO:0007669"/>
    <property type="project" value="UniProtKB-SubCell"/>
</dbReference>
<dbReference type="GO" id="GO:0008757">
    <property type="term" value="F:S-adenosylmethionine-dependent methyltransferase activity"/>
    <property type="evidence" value="ECO:0007669"/>
    <property type="project" value="UniProtKB-UniRule"/>
</dbReference>
<dbReference type="GO" id="GO:0032259">
    <property type="term" value="P:methylation"/>
    <property type="evidence" value="ECO:0007669"/>
    <property type="project" value="UniProtKB-KW"/>
</dbReference>
<dbReference type="GO" id="GO:0006364">
    <property type="term" value="P:rRNA processing"/>
    <property type="evidence" value="ECO:0007669"/>
    <property type="project" value="UniProtKB-UniRule"/>
</dbReference>
<dbReference type="Gene3D" id="3.30.2300.20">
    <property type="match status" value="1"/>
</dbReference>
<dbReference type="Gene3D" id="3.30.70.2810">
    <property type="match status" value="1"/>
</dbReference>
<dbReference type="Gene3D" id="3.40.50.150">
    <property type="entry name" value="Vaccinia Virus protein VP39"/>
    <property type="match status" value="1"/>
</dbReference>
<dbReference type="HAMAP" id="MF_01551">
    <property type="entry name" value="23SrRNA_methyltr_M"/>
    <property type="match status" value="1"/>
</dbReference>
<dbReference type="InterPro" id="IPR040739">
    <property type="entry name" value="RlmM_FDX"/>
</dbReference>
<dbReference type="InterPro" id="IPR048646">
    <property type="entry name" value="RlmM_THUMP-like"/>
</dbReference>
<dbReference type="InterPro" id="IPR002877">
    <property type="entry name" value="RNA_MeTrfase_FtsJ_dom"/>
</dbReference>
<dbReference type="InterPro" id="IPR011224">
    <property type="entry name" value="rRNA_MeTrfase_M"/>
</dbReference>
<dbReference type="InterPro" id="IPR029063">
    <property type="entry name" value="SAM-dependent_MTases_sf"/>
</dbReference>
<dbReference type="NCBIfam" id="NF008734">
    <property type="entry name" value="PRK11760.1"/>
    <property type="match status" value="1"/>
</dbReference>
<dbReference type="PANTHER" id="PTHR37524">
    <property type="entry name" value="RIBOSOMAL RNA LARGE SUBUNIT METHYLTRANSFERASE M"/>
    <property type="match status" value="1"/>
</dbReference>
<dbReference type="PANTHER" id="PTHR37524:SF2">
    <property type="entry name" value="RIBOSOMAL RNA METHYLTRANSFERASE FTSJ DOMAIN-CONTAINING PROTEIN"/>
    <property type="match status" value="1"/>
</dbReference>
<dbReference type="Pfam" id="PF01728">
    <property type="entry name" value="FtsJ"/>
    <property type="match status" value="1"/>
</dbReference>
<dbReference type="Pfam" id="PF18125">
    <property type="entry name" value="RlmM_FDX"/>
    <property type="match status" value="1"/>
</dbReference>
<dbReference type="Pfam" id="PF21239">
    <property type="entry name" value="RLMM_N"/>
    <property type="match status" value="1"/>
</dbReference>
<dbReference type="PIRSF" id="PIRSF028774">
    <property type="entry name" value="UCP028774"/>
    <property type="match status" value="1"/>
</dbReference>
<dbReference type="SUPFAM" id="SSF53335">
    <property type="entry name" value="S-adenosyl-L-methionine-dependent methyltransferases"/>
    <property type="match status" value="1"/>
</dbReference>
<keyword id="KW-0963">Cytoplasm</keyword>
<keyword id="KW-0489">Methyltransferase</keyword>
<keyword id="KW-0698">rRNA processing</keyword>
<keyword id="KW-0949">S-adenosyl-L-methionine</keyword>
<keyword id="KW-0808">Transferase</keyword>
<accession>A6WL14</accession>
<sequence>MKNLFLFCRAGFEKECAAEIQQRAGELNVGGFVKANNNDAYVVYQCFEDDAADTLVKQLPLDSLIFARQMFAASDLLVDLPENDRISPIVAALSDVSKAGEVRVETPDTNEAKELSAFCRKFTVPLRQHLKKSGSLLAQENPKRPIIHVCFIGPGRAYVGYSYSNNSSPHFMGIPRLKMAADAPSRSSLKLDEAFGQFVPKEEQEERIRSGMNSVDLGACPGGWTYQLVRRGMFVSAVDNGPMDEKLMETGQVKHYREDGFRFEPQRKNIYWLVCDMVEKPARVAELIEAWAINGWFKEAIFNLKLPMKSRYKEVTAILETMQTILKENGVSDFKVQCKHLYHDRDEVTVHLWLRPNTAWN</sequence>
<protein>
    <recommendedName>
        <fullName evidence="1">Ribosomal RNA large subunit methyltransferase M</fullName>
        <ecNumber evidence="1">2.1.1.186</ecNumber>
    </recommendedName>
    <alternativeName>
        <fullName evidence="1">23S rRNA (cytidine2498-2'-O)-methyltransferase</fullName>
    </alternativeName>
    <alternativeName>
        <fullName evidence="1">23S rRNA 2'-O-ribose methyltransferase RlmM</fullName>
    </alternativeName>
</protein>
<feature type="chain" id="PRO_0000314535" description="Ribosomal RNA large subunit methyltransferase M">
    <location>
        <begin position="1"/>
        <end position="361"/>
    </location>
</feature>
<feature type="active site" description="Proton acceptor" evidence="1">
    <location>
        <position position="305"/>
    </location>
</feature>
<feature type="binding site" evidence="1">
    <location>
        <position position="187"/>
    </location>
    <ligand>
        <name>S-adenosyl-L-methionine</name>
        <dbReference type="ChEBI" id="CHEBI:59789"/>
    </ligand>
</feature>
<feature type="binding site" evidence="1">
    <location>
        <begin position="220"/>
        <end position="223"/>
    </location>
    <ligand>
        <name>S-adenosyl-L-methionine</name>
        <dbReference type="ChEBI" id="CHEBI:59789"/>
    </ligand>
</feature>
<feature type="binding site" evidence="1">
    <location>
        <position position="239"/>
    </location>
    <ligand>
        <name>S-adenosyl-L-methionine</name>
        <dbReference type="ChEBI" id="CHEBI:59789"/>
    </ligand>
</feature>
<feature type="binding site" evidence="1">
    <location>
        <position position="259"/>
    </location>
    <ligand>
        <name>S-adenosyl-L-methionine</name>
        <dbReference type="ChEBI" id="CHEBI:59789"/>
    </ligand>
</feature>
<feature type="binding site" evidence="1">
    <location>
        <position position="276"/>
    </location>
    <ligand>
        <name>S-adenosyl-L-methionine</name>
        <dbReference type="ChEBI" id="CHEBI:59789"/>
    </ligand>
</feature>
<comment type="function">
    <text evidence="1">Catalyzes the 2'-O-methylation at nucleotide C2498 in 23S rRNA.</text>
</comment>
<comment type="catalytic activity">
    <reaction evidence="1">
        <text>cytidine(2498) in 23S rRNA + S-adenosyl-L-methionine = 2'-O-methylcytidine(2498) in 23S rRNA + S-adenosyl-L-homocysteine + H(+)</text>
        <dbReference type="Rhea" id="RHEA:42788"/>
        <dbReference type="Rhea" id="RHEA-COMP:10244"/>
        <dbReference type="Rhea" id="RHEA-COMP:10245"/>
        <dbReference type="ChEBI" id="CHEBI:15378"/>
        <dbReference type="ChEBI" id="CHEBI:57856"/>
        <dbReference type="ChEBI" id="CHEBI:59789"/>
        <dbReference type="ChEBI" id="CHEBI:74495"/>
        <dbReference type="ChEBI" id="CHEBI:82748"/>
        <dbReference type="EC" id="2.1.1.186"/>
    </reaction>
</comment>
<comment type="subunit">
    <text evidence="1">Monomer.</text>
</comment>
<comment type="subcellular location">
    <subcellularLocation>
        <location evidence="1">Cytoplasm</location>
    </subcellularLocation>
</comment>
<comment type="similarity">
    <text evidence="1">Belongs to the class I-like SAM-binding methyltransferase superfamily. RNA methyltransferase RlmE family. RlmM subfamily.</text>
</comment>
<reference key="1">
    <citation type="submission" date="2007-07" db="EMBL/GenBank/DDBJ databases">
        <title>Complete sequence of chromosome of Shewanella baltica OS185.</title>
        <authorList>
            <consortium name="US DOE Joint Genome Institute"/>
            <person name="Copeland A."/>
            <person name="Lucas S."/>
            <person name="Lapidus A."/>
            <person name="Barry K."/>
            <person name="Glavina del Rio T."/>
            <person name="Dalin E."/>
            <person name="Tice H."/>
            <person name="Pitluck S."/>
            <person name="Sims D."/>
            <person name="Brettin T."/>
            <person name="Bruce D."/>
            <person name="Detter J.C."/>
            <person name="Han C."/>
            <person name="Schmutz J."/>
            <person name="Larimer F."/>
            <person name="Land M."/>
            <person name="Hauser L."/>
            <person name="Kyrpides N."/>
            <person name="Mikhailova N."/>
            <person name="Brettar I."/>
            <person name="Rodrigues J."/>
            <person name="Konstantinidis K."/>
            <person name="Tiedje J."/>
            <person name="Richardson P."/>
        </authorList>
    </citation>
    <scope>NUCLEOTIDE SEQUENCE [LARGE SCALE GENOMIC DNA]</scope>
    <source>
        <strain>OS185</strain>
    </source>
</reference>
<name>RLMM_SHEB8</name>